<keyword id="KW-1185">Reference proteome</keyword>
<keyword id="KW-0677">Repeat</keyword>
<keyword id="KW-0853">WD repeat</keyword>
<accession>B6H7A3</accession>
<evidence type="ECO:0000255" key="1">
    <source>
        <dbReference type="HAMAP-Rule" id="MF_03037"/>
    </source>
</evidence>
<evidence type="ECO:0000256" key="2">
    <source>
        <dbReference type="SAM" id="MobiDB-lite"/>
    </source>
</evidence>
<gene>
    <name type="primary">cia1</name>
    <name type="ORF">Pc16g01970</name>
</gene>
<sequence>MSPKVTITHLSDLTPPSQERTWLTAPHPTLPLVATCSSDKTIRVYSLTNFTLLSTITGGHKRSVRTAAWKPHMTGESVLATGSFDATVGIWRRWDSYGQEGDAGMGMSSGDKQIPTDISTAASNGTGTDTADREEDEEEWRFAVLLDGHDSEVKSVSWSASGMLLATCSRDKSIWIWEDLDDGDNNFETVAVMQEHGGDVKCVSWHPSEECLASGSYDDTIRLWREDLDDWGQVACIKGHGGTVWFLDWEGEETEGNWSGPVADSVSESALSALQAQWRSQRALSGPRLLSCSDDRTVRVWRRQPKESQQTGPLSSATTGIPSIIRPTGTDEVWEEDAVLPRAHELPVYAVAWSKRTGLVASTGADGRIALYEERFVTREQEQEQQADSDAMDTTSGDVLRTEWVLVGVQDGAHGIYEINHVAWAKRADRRPGGEEEVLVSTADDGSVKVWTLTR</sequence>
<organism>
    <name type="scientific">Penicillium rubens (strain ATCC 28089 / DSM 1075 / NRRL 1951 / Wisconsin 54-1255)</name>
    <name type="common">Penicillium chrysogenum</name>
    <dbReference type="NCBI Taxonomy" id="500485"/>
    <lineage>
        <taxon>Eukaryota</taxon>
        <taxon>Fungi</taxon>
        <taxon>Dikarya</taxon>
        <taxon>Ascomycota</taxon>
        <taxon>Pezizomycotina</taxon>
        <taxon>Eurotiomycetes</taxon>
        <taxon>Eurotiomycetidae</taxon>
        <taxon>Eurotiales</taxon>
        <taxon>Aspergillaceae</taxon>
        <taxon>Penicillium</taxon>
        <taxon>Penicillium chrysogenum species complex</taxon>
    </lineage>
</organism>
<dbReference type="EMBL" id="AM920431">
    <property type="protein sequence ID" value="CAP92867.1"/>
    <property type="molecule type" value="Genomic_DNA"/>
</dbReference>
<dbReference type="RefSeq" id="XP_002560570.1">
    <property type="nucleotide sequence ID" value="XM_002560524.1"/>
</dbReference>
<dbReference type="SMR" id="B6H7A3"/>
<dbReference type="STRING" id="500485.B6H7A3"/>
<dbReference type="VEuPathDB" id="FungiDB:PCH_Pc16g01970"/>
<dbReference type="eggNOG" id="KOG0645">
    <property type="taxonomic scope" value="Eukaryota"/>
</dbReference>
<dbReference type="HOGENOM" id="CLU_000288_57_8_1"/>
<dbReference type="OMA" id="IREIRWS"/>
<dbReference type="OrthoDB" id="284782at2759"/>
<dbReference type="BioCyc" id="PCHR:PC16G01970-MONOMER"/>
<dbReference type="Proteomes" id="UP000000724">
    <property type="component" value="Contig Pc00c16"/>
</dbReference>
<dbReference type="GO" id="GO:0097361">
    <property type="term" value="C:cytosolic [4Fe-4S] assembly targeting complex"/>
    <property type="evidence" value="ECO:0007669"/>
    <property type="project" value="InterPro"/>
</dbReference>
<dbReference type="GO" id="GO:0016226">
    <property type="term" value="P:iron-sulfur cluster assembly"/>
    <property type="evidence" value="ECO:0007669"/>
    <property type="project" value="UniProtKB-UniRule"/>
</dbReference>
<dbReference type="Gene3D" id="2.130.10.10">
    <property type="entry name" value="YVTN repeat-like/Quinoprotein amine dehydrogenase"/>
    <property type="match status" value="1"/>
</dbReference>
<dbReference type="HAMAP" id="MF_03037">
    <property type="entry name" value="ciao1"/>
    <property type="match status" value="1"/>
</dbReference>
<dbReference type="InterPro" id="IPR028608">
    <property type="entry name" value="CIAO1/Cia1"/>
</dbReference>
<dbReference type="InterPro" id="IPR020472">
    <property type="entry name" value="G-protein_beta_WD-40_rep"/>
</dbReference>
<dbReference type="InterPro" id="IPR015943">
    <property type="entry name" value="WD40/YVTN_repeat-like_dom_sf"/>
</dbReference>
<dbReference type="InterPro" id="IPR036322">
    <property type="entry name" value="WD40_repeat_dom_sf"/>
</dbReference>
<dbReference type="InterPro" id="IPR001680">
    <property type="entry name" value="WD40_rpt"/>
</dbReference>
<dbReference type="PANTHER" id="PTHR19920:SF0">
    <property type="entry name" value="CYTOSOLIC IRON-SULFUR PROTEIN ASSEMBLY PROTEIN CIAO1-RELATED"/>
    <property type="match status" value="1"/>
</dbReference>
<dbReference type="PANTHER" id="PTHR19920">
    <property type="entry name" value="WD40 PROTEIN CIAO1"/>
    <property type="match status" value="1"/>
</dbReference>
<dbReference type="Pfam" id="PF00400">
    <property type="entry name" value="WD40"/>
    <property type="match status" value="6"/>
</dbReference>
<dbReference type="PRINTS" id="PR00320">
    <property type="entry name" value="GPROTEINBRPT"/>
</dbReference>
<dbReference type="SMART" id="SM00320">
    <property type="entry name" value="WD40"/>
    <property type="match status" value="7"/>
</dbReference>
<dbReference type="SUPFAM" id="SSF50978">
    <property type="entry name" value="WD40 repeat-like"/>
    <property type="match status" value="1"/>
</dbReference>
<dbReference type="PROSITE" id="PS50082">
    <property type="entry name" value="WD_REPEATS_2"/>
    <property type="match status" value="4"/>
</dbReference>
<dbReference type="PROSITE" id="PS50294">
    <property type="entry name" value="WD_REPEATS_REGION"/>
    <property type="match status" value="1"/>
</dbReference>
<comment type="function">
    <text evidence="1">Essential component of the cytosolic iron-sulfur (Fe/S) protein assembly machinery. Required for the maturation of extramitochondrial Fe/S proteins.</text>
</comment>
<comment type="similarity">
    <text evidence="1">Belongs to the WD repeat CIA1 family.</text>
</comment>
<proteinExistence type="inferred from homology"/>
<name>CIAO1_PENRW</name>
<reference key="1">
    <citation type="journal article" date="2008" name="Nat. Biotechnol.">
        <title>Genome sequencing and analysis of the filamentous fungus Penicillium chrysogenum.</title>
        <authorList>
            <person name="van den Berg M.A."/>
            <person name="Albang R."/>
            <person name="Albermann K."/>
            <person name="Badger J.H."/>
            <person name="Daran J.-M."/>
            <person name="Driessen A.J.M."/>
            <person name="Garcia-Estrada C."/>
            <person name="Fedorova N.D."/>
            <person name="Harris D.M."/>
            <person name="Heijne W.H.M."/>
            <person name="Joardar V.S."/>
            <person name="Kiel J.A.K.W."/>
            <person name="Kovalchuk A."/>
            <person name="Martin J.F."/>
            <person name="Nierman W.C."/>
            <person name="Nijland J.G."/>
            <person name="Pronk J.T."/>
            <person name="Roubos J.A."/>
            <person name="van der Klei I.J."/>
            <person name="van Peij N.N.M.E."/>
            <person name="Veenhuis M."/>
            <person name="von Doehren H."/>
            <person name="Wagner C."/>
            <person name="Wortman J.R."/>
            <person name="Bovenberg R.A.L."/>
        </authorList>
    </citation>
    <scope>NUCLEOTIDE SEQUENCE [LARGE SCALE GENOMIC DNA]</scope>
    <source>
        <strain>ATCC 28089 / DSM 1075 / NRRL 1951 / Wisconsin 54-1255</strain>
    </source>
</reference>
<protein>
    <recommendedName>
        <fullName evidence="1">Probable cytosolic iron-sulfur protein assembly protein 1</fullName>
    </recommendedName>
</protein>
<feature type="chain" id="PRO_0000382522" description="Probable cytosolic iron-sulfur protein assembly protein 1">
    <location>
        <begin position="1"/>
        <end position="455"/>
    </location>
</feature>
<feature type="repeat" description="WD 1">
    <location>
        <begin position="8"/>
        <end position="55"/>
    </location>
</feature>
<feature type="repeat" description="WD 2">
    <location>
        <begin position="59"/>
        <end position="101"/>
    </location>
</feature>
<feature type="repeat" description="WD 3">
    <location>
        <begin position="148"/>
        <end position="187"/>
    </location>
</feature>
<feature type="repeat" description="WD 4">
    <location>
        <begin position="195"/>
        <end position="234"/>
    </location>
</feature>
<feature type="repeat" description="WD 5">
    <location>
        <begin position="266"/>
        <end position="311"/>
    </location>
</feature>
<feature type="repeat" description="WD 6">
    <location>
        <begin position="343"/>
        <end position="382"/>
    </location>
</feature>
<feature type="repeat" description="WD 7">
    <location>
        <begin position="413"/>
        <end position="455"/>
    </location>
</feature>
<feature type="region of interest" description="Disordered" evidence="2">
    <location>
        <begin position="103"/>
        <end position="136"/>
    </location>
</feature>
<feature type="region of interest" description="Disordered" evidence="2">
    <location>
        <begin position="302"/>
        <end position="326"/>
    </location>
</feature>
<feature type="compositionally biased region" description="Polar residues" evidence="2">
    <location>
        <begin position="116"/>
        <end position="125"/>
    </location>
</feature>
<feature type="compositionally biased region" description="Polar residues" evidence="2">
    <location>
        <begin position="307"/>
        <end position="321"/>
    </location>
</feature>